<dbReference type="EC" id="6.1.1.11" evidence="1"/>
<dbReference type="EMBL" id="CP001251">
    <property type="protein sequence ID" value="ACK42656.1"/>
    <property type="molecule type" value="Genomic_DNA"/>
</dbReference>
<dbReference type="RefSeq" id="WP_012583734.1">
    <property type="nucleotide sequence ID" value="NC_011661.1"/>
</dbReference>
<dbReference type="RefSeq" id="YP_002353270.1">
    <property type="nucleotide sequence ID" value="NC_011661.1"/>
</dbReference>
<dbReference type="SMR" id="B8E0R9"/>
<dbReference type="FunCoup" id="B8E0R9">
    <property type="interactions" value="378"/>
</dbReference>
<dbReference type="STRING" id="515635.Dtur_1382"/>
<dbReference type="EnsemblBacteria" id="ACK42656">
    <property type="protein sequence ID" value="ACK42656"/>
    <property type="gene ID" value="Dtur_1382"/>
</dbReference>
<dbReference type="KEGG" id="dtu:Dtur_1382"/>
<dbReference type="PATRIC" id="fig|515635.4.peg.1428"/>
<dbReference type="eggNOG" id="COG0172">
    <property type="taxonomic scope" value="Bacteria"/>
</dbReference>
<dbReference type="HOGENOM" id="CLU_023797_0_1_0"/>
<dbReference type="InParanoid" id="B8E0R9"/>
<dbReference type="OrthoDB" id="9804647at2"/>
<dbReference type="UniPathway" id="UPA00906">
    <property type="reaction ID" value="UER00895"/>
</dbReference>
<dbReference type="Proteomes" id="UP000007719">
    <property type="component" value="Chromosome"/>
</dbReference>
<dbReference type="GO" id="GO:0005737">
    <property type="term" value="C:cytoplasm"/>
    <property type="evidence" value="ECO:0007669"/>
    <property type="project" value="UniProtKB-SubCell"/>
</dbReference>
<dbReference type="GO" id="GO:0005524">
    <property type="term" value="F:ATP binding"/>
    <property type="evidence" value="ECO:0007669"/>
    <property type="project" value="UniProtKB-UniRule"/>
</dbReference>
<dbReference type="GO" id="GO:0004828">
    <property type="term" value="F:serine-tRNA ligase activity"/>
    <property type="evidence" value="ECO:0000318"/>
    <property type="project" value="GO_Central"/>
</dbReference>
<dbReference type="GO" id="GO:0000049">
    <property type="term" value="F:tRNA binding"/>
    <property type="evidence" value="ECO:0000318"/>
    <property type="project" value="GO_Central"/>
</dbReference>
<dbReference type="GO" id="GO:0016260">
    <property type="term" value="P:selenocysteine biosynthetic process"/>
    <property type="evidence" value="ECO:0007669"/>
    <property type="project" value="UniProtKB-UniRule"/>
</dbReference>
<dbReference type="GO" id="GO:0006434">
    <property type="term" value="P:seryl-tRNA aminoacylation"/>
    <property type="evidence" value="ECO:0000318"/>
    <property type="project" value="GO_Central"/>
</dbReference>
<dbReference type="CDD" id="cd00770">
    <property type="entry name" value="SerRS_core"/>
    <property type="match status" value="1"/>
</dbReference>
<dbReference type="FunFam" id="1.10.287.40:FF:000004">
    <property type="entry name" value="Serine--tRNA ligase"/>
    <property type="match status" value="1"/>
</dbReference>
<dbReference type="FunFam" id="3.30.930.10:FF:000055">
    <property type="entry name" value="Serine--tRNA ligase"/>
    <property type="match status" value="1"/>
</dbReference>
<dbReference type="Gene3D" id="3.30.930.10">
    <property type="entry name" value="Bira Bifunctional Protein, Domain 2"/>
    <property type="match status" value="1"/>
</dbReference>
<dbReference type="Gene3D" id="1.10.287.40">
    <property type="entry name" value="Serine-tRNA synthetase, tRNA binding domain"/>
    <property type="match status" value="1"/>
</dbReference>
<dbReference type="HAMAP" id="MF_00176">
    <property type="entry name" value="Ser_tRNA_synth_type1"/>
    <property type="match status" value="1"/>
</dbReference>
<dbReference type="InterPro" id="IPR002314">
    <property type="entry name" value="aa-tRNA-synt_IIb"/>
</dbReference>
<dbReference type="InterPro" id="IPR006195">
    <property type="entry name" value="aa-tRNA-synth_II"/>
</dbReference>
<dbReference type="InterPro" id="IPR045864">
    <property type="entry name" value="aa-tRNA-synth_II/BPL/LPL"/>
</dbReference>
<dbReference type="InterPro" id="IPR002317">
    <property type="entry name" value="Ser-tRNA-ligase_type_1"/>
</dbReference>
<dbReference type="InterPro" id="IPR015866">
    <property type="entry name" value="Ser-tRNA-synth_1_N"/>
</dbReference>
<dbReference type="InterPro" id="IPR042103">
    <property type="entry name" value="SerRS_1_N_sf"/>
</dbReference>
<dbReference type="InterPro" id="IPR033729">
    <property type="entry name" value="SerRS_core"/>
</dbReference>
<dbReference type="InterPro" id="IPR010978">
    <property type="entry name" value="tRNA-bd_arm"/>
</dbReference>
<dbReference type="NCBIfam" id="TIGR00414">
    <property type="entry name" value="serS"/>
    <property type="match status" value="1"/>
</dbReference>
<dbReference type="PANTHER" id="PTHR11778">
    <property type="entry name" value="SERYL-TRNA SYNTHETASE"/>
    <property type="match status" value="1"/>
</dbReference>
<dbReference type="Pfam" id="PF02403">
    <property type="entry name" value="Seryl_tRNA_N"/>
    <property type="match status" value="1"/>
</dbReference>
<dbReference type="Pfam" id="PF00587">
    <property type="entry name" value="tRNA-synt_2b"/>
    <property type="match status" value="1"/>
</dbReference>
<dbReference type="PIRSF" id="PIRSF001529">
    <property type="entry name" value="Ser-tRNA-synth_IIa"/>
    <property type="match status" value="1"/>
</dbReference>
<dbReference type="PRINTS" id="PR00981">
    <property type="entry name" value="TRNASYNTHSER"/>
</dbReference>
<dbReference type="SUPFAM" id="SSF55681">
    <property type="entry name" value="Class II aaRS and biotin synthetases"/>
    <property type="match status" value="1"/>
</dbReference>
<dbReference type="SUPFAM" id="SSF46589">
    <property type="entry name" value="tRNA-binding arm"/>
    <property type="match status" value="1"/>
</dbReference>
<dbReference type="PROSITE" id="PS50862">
    <property type="entry name" value="AA_TRNA_LIGASE_II"/>
    <property type="match status" value="1"/>
</dbReference>
<reference key="1">
    <citation type="journal article" date="2016" name="Front. Microbiol.">
        <title>The complete genome sequence of hyperthermophile Dictyoglomus turgidum DSM 6724 reveals a specialized carbohydrate fermentor.</title>
        <authorList>
            <person name="Brumm P.J."/>
            <person name="Gowda K."/>
            <person name="Robb F.T."/>
            <person name="Mead D.A."/>
        </authorList>
    </citation>
    <scope>NUCLEOTIDE SEQUENCE [LARGE SCALE GENOMIC DNA]</scope>
    <source>
        <strain>DSM 6724 / Z-1310</strain>
    </source>
</reference>
<keyword id="KW-0030">Aminoacyl-tRNA synthetase</keyword>
<keyword id="KW-0067">ATP-binding</keyword>
<keyword id="KW-0963">Cytoplasm</keyword>
<keyword id="KW-0436">Ligase</keyword>
<keyword id="KW-0547">Nucleotide-binding</keyword>
<keyword id="KW-0648">Protein biosynthesis</keyword>
<keyword id="KW-1185">Reference proteome</keyword>
<organism>
    <name type="scientific">Dictyoglomus turgidum (strain DSM 6724 / Z-1310)</name>
    <dbReference type="NCBI Taxonomy" id="515635"/>
    <lineage>
        <taxon>Bacteria</taxon>
        <taxon>Pseudomonadati</taxon>
        <taxon>Dictyoglomota</taxon>
        <taxon>Dictyoglomia</taxon>
        <taxon>Dictyoglomales</taxon>
        <taxon>Dictyoglomaceae</taxon>
        <taxon>Dictyoglomus</taxon>
    </lineage>
</organism>
<name>SYS_DICTD</name>
<accession>B8E0R9</accession>
<proteinExistence type="inferred from homology"/>
<protein>
    <recommendedName>
        <fullName evidence="1">Serine--tRNA ligase</fullName>
        <ecNumber evidence="1">6.1.1.11</ecNumber>
    </recommendedName>
    <alternativeName>
        <fullName evidence="1">Seryl-tRNA synthetase</fullName>
        <shortName evidence="1">SerRS</shortName>
    </alternativeName>
    <alternativeName>
        <fullName evidence="1">Seryl-tRNA(Ser/Sec) synthetase</fullName>
    </alternativeName>
</protein>
<sequence length="425" mass="49242">MIDIKILRENPEIMKENIILRNLDPQKYDVDYIIELDAKRRSLQKELDNLRAQRNKISQEIGKHQGEEREKLIKEAKILKEKIEELAKEYDNVEKELFSRLWQLPNFLSPKAPRGKDEKDNVEIKKWGEIKTFNFTPKDHLDLALLNDLVDFERGSKVTGSNFYYLKNEAVLLEFALFRLVIDTLLPEGFKLFITPDLARMEIIDGIGFQPRGPEAQIYRVEDTDLGLIATAEITLGGYHKDEILDELDLPLKYLGFSHCFRTEAGAYGRYNRGLYRVHQFSKAEIFIICRPEDSEEMHEYILGLEEKIFQKLEIPYRVLDICSGDLGAPAARKFDIEAWMPGRGEFGEVTSCSNCTDYQARRLNIRFRRVTGEVEYVHMLNGTAIAISRALIAIFENYQQEDGSILIPKALQPYIGISEIRPKK</sequence>
<evidence type="ECO:0000255" key="1">
    <source>
        <dbReference type="HAMAP-Rule" id="MF_00176"/>
    </source>
</evidence>
<feature type="chain" id="PRO_1000199475" description="Serine--tRNA ligase">
    <location>
        <begin position="1"/>
        <end position="425"/>
    </location>
</feature>
<feature type="binding site" evidence="1">
    <location>
        <begin position="231"/>
        <end position="233"/>
    </location>
    <ligand>
        <name>L-serine</name>
        <dbReference type="ChEBI" id="CHEBI:33384"/>
    </ligand>
</feature>
<feature type="binding site" evidence="1">
    <location>
        <begin position="262"/>
        <end position="264"/>
    </location>
    <ligand>
        <name>ATP</name>
        <dbReference type="ChEBI" id="CHEBI:30616"/>
    </ligand>
</feature>
<feature type="binding site" evidence="1">
    <location>
        <position position="278"/>
    </location>
    <ligand>
        <name>ATP</name>
        <dbReference type="ChEBI" id="CHEBI:30616"/>
    </ligand>
</feature>
<feature type="binding site" evidence="1">
    <location>
        <position position="285"/>
    </location>
    <ligand>
        <name>L-serine</name>
        <dbReference type="ChEBI" id="CHEBI:33384"/>
    </ligand>
</feature>
<feature type="binding site" evidence="1">
    <location>
        <begin position="349"/>
        <end position="352"/>
    </location>
    <ligand>
        <name>ATP</name>
        <dbReference type="ChEBI" id="CHEBI:30616"/>
    </ligand>
</feature>
<feature type="binding site" evidence="1">
    <location>
        <position position="384"/>
    </location>
    <ligand>
        <name>L-serine</name>
        <dbReference type="ChEBI" id="CHEBI:33384"/>
    </ligand>
</feature>
<gene>
    <name evidence="1" type="primary">serS</name>
    <name type="ordered locus">Dtur_1382</name>
</gene>
<comment type="function">
    <text evidence="1">Catalyzes the attachment of serine to tRNA(Ser). Is also able to aminoacylate tRNA(Sec) with serine, to form the misacylated tRNA L-seryl-tRNA(Sec), which will be further converted into selenocysteinyl-tRNA(Sec).</text>
</comment>
<comment type="catalytic activity">
    <reaction evidence="1">
        <text>tRNA(Ser) + L-serine + ATP = L-seryl-tRNA(Ser) + AMP + diphosphate + H(+)</text>
        <dbReference type="Rhea" id="RHEA:12292"/>
        <dbReference type="Rhea" id="RHEA-COMP:9669"/>
        <dbReference type="Rhea" id="RHEA-COMP:9703"/>
        <dbReference type="ChEBI" id="CHEBI:15378"/>
        <dbReference type="ChEBI" id="CHEBI:30616"/>
        <dbReference type="ChEBI" id="CHEBI:33019"/>
        <dbReference type="ChEBI" id="CHEBI:33384"/>
        <dbReference type="ChEBI" id="CHEBI:78442"/>
        <dbReference type="ChEBI" id="CHEBI:78533"/>
        <dbReference type="ChEBI" id="CHEBI:456215"/>
        <dbReference type="EC" id="6.1.1.11"/>
    </reaction>
</comment>
<comment type="catalytic activity">
    <reaction evidence="1">
        <text>tRNA(Sec) + L-serine + ATP = L-seryl-tRNA(Sec) + AMP + diphosphate + H(+)</text>
        <dbReference type="Rhea" id="RHEA:42580"/>
        <dbReference type="Rhea" id="RHEA-COMP:9742"/>
        <dbReference type="Rhea" id="RHEA-COMP:10128"/>
        <dbReference type="ChEBI" id="CHEBI:15378"/>
        <dbReference type="ChEBI" id="CHEBI:30616"/>
        <dbReference type="ChEBI" id="CHEBI:33019"/>
        <dbReference type="ChEBI" id="CHEBI:33384"/>
        <dbReference type="ChEBI" id="CHEBI:78442"/>
        <dbReference type="ChEBI" id="CHEBI:78533"/>
        <dbReference type="ChEBI" id="CHEBI:456215"/>
        <dbReference type="EC" id="6.1.1.11"/>
    </reaction>
</comment>
<comment type="pathway">
    <text evidence="1">Aminoacyl-tRNA biosynthesis; selenocysteinyl-tRNA(Sec) biosynthesis; L-seryl-tRNA(Sec) from L-serine and tRNA(Sec): step 1/1.</text>
</comment>
<comment type="subunit">
    <text evidence="1">Homodimer. The tRNA molecule binds across the dimer.</text>
</comment>
<comment type="subcellular location">
    <subcellularLocation>
        <location evidence="1">Cytoplasm</location>
    </subcellularLocation>
</comment>
<comment type="domain">
    <text evidence="1">Consists of two distinct domains, a catalytic core and a N-terminal extension that is involved in tRNA binding.</text>
</comment>
<comment type="similarity">
    <text evidence="1">Belongs to the class-II aminoacyl-tRNA synthetase family. Type-1 seryl-tRNA synthetase subfamily.</text>
</comment>